<accession>Q8X260</accession>
<accession>Q7LWW2</accession>
<keyword id="KW-0963">Cytoplasm</keyword>
<keyword id="KW-0227">DNA damage</keyword>
<keyword id="KW-0234">DNA repair</keyword>
<keyword id="KW-0255">Endonuclease</keyword>
<keyword id="KW-0378">Hydrolase</keyword>
<keyword id="KW-0540">Nuclease</keyword>
<keyword id="KW-1185">Reference proteome</keyword>
<organism>
    <name type="scientific">Methanopyrus kandleri (strain AV19 / DSM 6324 / JCM 9639 / NBRC 100938)</name>
    <dbReference type="NCBI Taxonomy" id="190192"/>
    <lineage>
        <taxon>Archaea</taxon>
        <taxon>Methanobacteriati</taxon>
        <taxon>Methanobacteriota</taxon>
        <taxon>Methanomada group</taxon>
        <taxon>Methanopyri</taxon>
        <taxon>Methanopyrales</taxon>
        <taxon>Methanopyraceae</taxon>
        <taxon>Methanopyrus</taxon>
    </lineage>
</organism>
<reference key="1">
    <citation type="journal article" date="2001" name="Proc. Natl. Acad. Sci. U.S.A.">
        <title>A type IB topoisomerase with DNA repair activities.</title>
        <authorList>
            <person name="Belova G.I."/>
            <person name="Prasad R."/>
            <person name="Kozyavkin S.A."/>
            <person name="Lake J.A."/>
            <person name="Wilson S.H."/>
            <person name="Slesarev A.I."/>
        </authorList>
    </citation>
    <scope>NUCLEOTIDE SEQUENCE [GENOMIC DNA]</scope>
</reference>
<reference key="2">
    <citation type="journal article" date="2002" name="Proc. Natl. Acad. Sci. U.S.A.">
        <title>The complete genome of hyperthermophile Methanopyrus kandleri AV19 and monophyly of archaeal methanogens.</title>
        <authorList>
            <person name="Slesarev A.I."/>
            <person name="Mezhevaya K.V."/>
            <person name="Makarova K.S."/>
            <person name="Polushin N.N."/>
            <person name="Shcherbinina O.V."/>
            <person name="Shakhova V.V."/>
            <person name="Belova G.I."/>
            <person name="Aravind L."/>
            <person name="Natale D.A."/>
            <person name="Rogozin I.B."/>
            <person name="Tatusov R.L."/>
            <person name="Wolf Y.I."/>
            <person name="Stetter K.O."/>
            <person name="Malykh A.G."/>
            <person name="Koonin E.V."/>
            <person name="Kozyavkin S.A."/>
        </authorList>
    </citation>
    <scope>NUCLEOTIDE SEQUENCE [LARGE SCALE GENOMIC DNA]</scope>
    <source>
        <strain>AV19 / DSM 6324 / JCM 9639 / NBRC 100938</strain>
    </source>
</reference>
<feature type="chain" id="PRO_0000159688" description="Endonuclease V">
    <location>
        <begin position="1"/>
        <end position="229"/>
    </location>
</feature>
<feature type="site" description="Interaction with target DNA" evidence="1">
    <location>
        <position position="77"/>
    </location>
</feature>
<evidence type="ECO:0000255" key="1">
    <source>
        <dbReference type="HAMAP-Rule" id="MF_00801"/>
    </source>
</evidence>
<protein>
    <recommendedName>
        <fullName evidence="1">Endonuclease V</fullName>
        <ecNumber evidence="1">3.1.21.7</ecNumber>
    </recommendedName>
    <alternativeName>
        <fullName evidence="1">Deoxyinosine 3'endonuclease</fullName>
    </alternativeName>
    <alternativeName>
        <fullName evidence="1">Deoxyribonuclease V</fullName>
        <shortName evidence="1">DNase V</shortName>
    </alternativeName>
</protein>
<proteinExistence type="inferred from homology"/>
<dbReference type="EC" id="3.1.21.7" evidence="1"/>
<dbReference type="EMBL" id="AF311944">
    <property type="protein sequence ID" value="AAL61958.1"/>
    <property type="molecule type" value="Genomic_DNA"/>
</dbReference>
<dbReference type="EMBL" id="AE009439">
    <property type="protein sequence ID" value="AAM02648.1"/>
    <property type="molecule type" value="Genomic_DNA"/>
</dbReference>
<dbReference type="RefSeq" id="WP_011019803.1">
    <property type="nucleotide sequence ID" value="NC_003551.1"/>
</dbReference>
<dbReference type="SMR" id="Q8X260"/>
<dbReference type="STRING" id="190192.MK1435"/>
<dbReference type="PaxDb" id="190192-MK1435"/>
<dbReference type="EnsemblBacteria" id="AAM02648">
    <property type="protein sequence ID" value="AAM02648"/>
    <property type="gene ID" value="MK1435"/>
</dbReference>
<dbReference type="GeneID" id="1478030"/>
<dbReference type="KEGG" id="mka:MK1435"/>
<dbReference type="PATRIC" id="fig|190192.8.peg.1591"/>
<dbReference type="HOGENOM" id="CLU_047631_1_1_2"/>
<dbReference type="InParanoid" id="Q8X260"/>
<dbReference type="OrthoDB" id="7885at2157"/>
<dbReference type="Proteomes" id="UP000001826">
    <property type="component" value="Chromosome"/>
</dbReference>
<dbReference type="GO" id="GO:0005737">
    <property type="term" value="C:cytoplasm"/>
    <property type="evidence" value="ECO:0007669"/>
    <property type="project" value="UniProtKB-SubCell"/>
</dbReference>
<dbReference type="GO" id="GO:0043737">
    <property type="term" value="F:deoxyribonuclease V activity"/>
    <property type="evidence" value="ECO:0007669"/>
    <property type="project" value="UniProtKB-UniRule"/>
</dbReference>
<dbReference type="GO" id="GO:0016891">
    <property type="term" value="F:RNA endonuclease activity, producing 5'-phosphomonoesters"/>
    <property type="evidence" value="ECO:0007669"/>
    <property type="project" value="TreeGrafter"/>
</dbReference>
<dbReference type="GO" id="GO:0003727">
    <property type="term" value="F:single-stranded RNA binding"/>
    <property type="evidence" value="ECO:0007669"/>
    <property type="project" value="TreeGrafter"/>
</dbReference>
<dbReference type="GO" id="GO:0006281">
    <property type="term" value="P:DNA repair"/>
    <property type="evidence" value="ECO:0007669"/>
    <property type="project" value="UniProtKB-UniRule"/>
</dbReference>
<dbReference type="CDD" id="cd06559">
    <property type="entry name" value="Endonuclease_V"/>
    <property type="match status" value="1"/>
</dbReference>
<dbReference type="Gene3D" id="3.30.2170.10">
    <property type="entry name" value="archaeoglobus fulgidus dsm 4304 superfamily"/>
    <property type="match status" value="1"/>
</dbReference>
<dbReference type="HAMAP" id="MF_00801">
    <property type="entry name" value="Endonuclease_5"/>
    <property type="match status" value="1"/>
</dbReference>
<dbReference type="InterPro" id="IPR007581">
    <property type="entry name" value="Endonuclease-V"/>
</dbReference>
<dbReference type="PANTHER" id="PTHR28511">
    <property type="entry name" value="ENDONUCLEASE V"/>
    <property type="match status" value="1"/>
</dbReference>
<dbReference type="PANTHER" id="PTHR28511:SF1">
    <property type="entry name" value="ENDONUCLEASE V"/>
    <property type="match status" value="1"/>
</dbReference>
<dbReference type="Pfam" id="PF04493">
    <property type="entry name" value="Endonuclease_5"/>
    <property type="match status" value="1"/>
</dbReference>
<sequence>MKSAEWFEASTEEERVEIQRKVARKVRLEPLDDVDAVAGVDVSYRGEEYRAAAVVLDPETYEVLDRRVVHGTTDVPYEPGFLAFREGPPALEALEGLDFDLLFVHGHGVAHPRRAGLASHLGVALDVPTIGVARRPLVGRSKEEPSRIGDTTPLVHRGEVVGYLVRTDAEARPVVVSPGHRCNLEDAVRWTLRLVRVGKWPEPLRLADLLSRRGASRVEGESRGAGVRR</sequence>
<name>NFI_METKA</name>
<gene>
    <name evidence="1" type="primary">nfi</name>
    <name type="ordered locus">MK1435</name>
</gene>
<comment type="function">
    <text evidence="1">DNA repair enzyme involved in the repair of deaminated bases. Selectively cleaves double-stranded DNA at the second phosphodiester bond 3' to a deoxyinosine leaving behind the intact lesion on the nicked DNA.</text>
</comment>
<comment type="catalytic activity">
    <reaction evidence="1">
        <text>Endonucleolytic cleavage at apurinic or apyrimidinic sites to products with a 5'-phosphate.</text>
        <dbReference type="EC" id="3.1.21.7"/>
    </reaction>
</comment>
<comment type="subcellular location">
    <subcellularLocation>
        <location evidence="1">Cytoplasm</location>
    </subcellularLocation>
</comment>
<comment type="similarity">
    <text evidence="1">Belongs to the endonuclease V family.</text>
</comment>